<accession>P0ADF2</accession>
<accession>P22183</accession>
<dbReference type="EMBL" id="AE005674">
    <property type="protein sequence ID" value="AAN41739.1"/>
    <property type="molecule type" value="Genomic_DNA"/>
</dbReference>
<dbReference type="EMBL" id="AE014073">
    <property type="protein sequence ID" value="AAP15620.1"/>
    <property type="molecule type" value="Genomic_DNA"/>
</dbReference>
<dbReference type="RefSeq" id="NP_706032.1">
    <property type="nucleotide sequence ID" value="NC_004337.2"/>
</dbReference>
<dbReference type="RefSeq" id="WP_001303787.1">
    <property type="nucleotide sequence ID" value="NZ_WPGW01000005.1"/>
</dbReference>
<dbReference type="STRING" id="198214.SF0074"/>
<dbReference type="PaxDb" id="198214-SF0074"/>
<dbReference type="GeneID" id="1024557"/>
<dbReference type="KEGG" id="sfl:SF0074"/>
<dbReference type="KEGG" id="sfx:S0076"/>
<dbReference type="PATRIC" id="fig|623.157.peg.4602"/>
<dbReference type="HOGENOM" id="CLU_3412513_0_0_6"/>
<dbReference type="Proteomes" id="UP000001006">
    <property type="component" value="Chromosome"/>
</dbReference>
<dbReference type="Proteomes" id="UP000002673">
    <property type="component" value="Chromosome"/>
</dbReference>
<sequence>MRNLQPNMSRWAFFAKSVGTWNKSSCRS</sequence>
<name>LPFS_SHIFL</name>
<reference key="1">
    <citation type="journal article" date="2002" name="Nucleic Acids Res.">
        <title>Genome sequence of Shigella flexneri 2a: insights into pathogenicity through comparison with genomes of Escherichia coli K12 and O157.</title>
        <authorList>
            <person name="Jin Q."/>
            <person name="Yuan Z."/>
            <person name="Xu J."/>
            <person name="Wang Y."/>
            <person name="Shen Y."/>
            <person name="Lu W."/>
            <person name="Wang J."/>
            <person name="Liu H."/>
            <person name="Yang J."/>
            <person name="Yang F."/>
            <person name="Zhang X."/>
            <person name="Zhang J."/>
            <person name="Yang G."/>
            <person name="Wu H."/>
            <person name="Qu D."/>
            <person name="Dong J."/>
            <person name="Sun L."/>
            <person name="Xue Y."/>
            <person name="Zhao A."/>
            <person name="Gao Y."/>
            <person name="Zhu J."/>
            <person name="Kan B."/>
            <person name="Ding K."/>
            <person name="Chen S."/>
            <person name="Cheng H."/>
            <person name="Yao Z."/>
            <person name="He B."/>
            <person name="Chen R."/>
            <person name="Ma D."/>
            <person name="Qiang B."/>
            <person name="Wen Y."/>
            <person name="Hou Y."/>
            <person name="Yu J."/>
        </authorList>
    </citation>
    <scope>NUCLEOTIDE SEQUENCE [LARGE SCALE GENOMIC DNA]</scope>
    <source>
        <strain>301 / Serotype 2a</strain>
    </source>
</reference>
<reference key="2">
    <citation type="journal article" date="2003" name="Infect. Immun.">
        <title>Complete genome sequence and comparative genomics of Shigella flexneri serotype 2a strain 2457T.</title>
        <authorList>
            <person name="Wei J."/>
            <person name="Goldberg M.B."/>
            <person name="Burland V."/>
            <person name="Venkatesan M.M."/>
            <person name="Deng W."/>
            <person name="Fournier G."/>
            <person name="Mayhew G.F."/>
            <person name="Plunkett G. III"/>
            <person name="Rose D.J."/>
            <person name="Darling A."/>
            <person name="Mau B."/>
            <person name="Perna N.T."/>
            <person name="Payne S.M."/>
            <person name="Runyen-Janecky L.J."/>
            <person name="Zhou S."/>
            <person name="Schwartz D.C."/>
            <person name="Blattner F.R."/>
        </authorList>
    </citation>
    <scope>NUCLEOTIDE SEQUENCE [LARGE SCALE GENOMIC DNA]</scope>
    <source>
        <strain>ATCC 700930 / 2457T / Serotype 2a</strain>
    </source>
</reference>
<gene>
    <name type="primary">fruL</name>
    <name type="ordered locus">SF0074</name>
    <name type="ordered locus">S0076</name>
</gene>
<evidence type="ECO:0000305" key="1"/>
<protein>
    <recommendedName>
        <fullName>Putative fruR/shl operon leader peptide</fullName>
    </recommendedName>
</protein>
<comment type="caution">
    <text evidence="1">Could be the product of a pseudogene.</text>
</comment>
<proteinExistence type="uncertain"/>
<organism>
    <name type="scientific">Shigella flexneri</name>
    <dbReference type="NCBI Taxonomy" id="623"/>
    <lineage>
        <taxon>Bacteria</taxon>
        <taxon>Pseudomonadati</taxon>
        <taxon>Pseudomonadota</taxon>
        <taxon>Gammaproteobacteria</taxon>
        <taxon>Enterobacterales</taxon>
        <taxon>Enterobacteriaceae</taxon>
        <taxon>Shigella</taxon>
    </lineage>
</organism>
<keyword id="KW-1185">Reference proteome</keyword>
<feature type="peptide" id="PRO_0000044613" description="Putative fruR/shl operon leader peptide">
    <location>
        <begin position="1"/>
        <end position="28"/>
    </location>
</feature>